<feature type="chain" id="PRO_1000149541" description="Probable phosphoglycerate mutase GpmB">
    <location>
        <begin position="1"/>
        <end position="215"/>
    </location>
</feature>
<feature type="active site" description="Tele-phosphohistidine intermediate" evidence="1">
    <location>
        <position position="9"/>
    </location>
</feature>
<feature type="active site" description="Proton donor/acceptor" evidence="1">
    <location>
        <position position="82"/>
    </location>
</feature>
<feature type="binding site" evidence="1">
    <location>
        <begin position="8"/>
        <end position="15"/>
    </location>
    <ligand>
        <name>substrate</name>
    </ligand>
</feature>
<feature type="binding site" evidence="1">
    <location>
        <begin position="21"/>
        <end position="22"/>
    </location>
    <ligand>
        <name>substrate</name>
    </ligand>
</feature>
<feature type="binding site" evidence="1">
    <location>
        <position position="58"/>
    </location>
    <ligand>
        <name>substrate</name>
    </ligand>
</feature>
<feature type="binding site" evidence="1">
    <location>
        <begin position="82"/>
        <end position="85"/>
    </location>
    <ligand>
        <name>substrate</name>
    </ligand>
</feature>
<feature type="binding site" evidence="1">
    <location>
        <begin position="151"/>
        <end position="152"/>
    </location>
    <ligand>
        <name>substrate</name>
    </ligand>
</feature>
<feature type="site" description="Transition state stabilizer" evidence="1">
    <location>
        <position position="150"/>
    </location>
</feature>
<accession>A1JJB8</accession>
<organism>
    <name type="scientific">Yersinia enterocolitica serotype O:8 / biotype 1B (strain NCTC 13174 / 8081)</name>
    <dbReference type="NCBI Taxonomy" id="393305"/>
    <lineage>
        <taxon>Bacteria</taxon>
        <taxon>Pseudomonadati</taxon>
        <taxon>Pseudomonadota</taxon>
        <taxon>Gammaproteobacteria</taxon>
        <taxon>Enterobacterales</taxon>
        <taxon>Yersiniaceae</taxon>
        <taxon>Yersinia</taxon>
    </lineage>
</organism>
<name>GPMB_YERE8</name>
<evidence type="ECO:0000255" key="1">
    <source>
        <dbReference type="HAMAP-Rule" id="MF_01040"/>
    </source>
</evidence>
<sequence length="215" mass="23729">MLQVFLVRHGETVWNASRQIQGQSDSPLTAVGERQAHLVAQRVRSQGITHIITSDLGRTQQTAKIIADACGLKVVTDPRLRELNMGVLETRPIESLTPEEEQWRKQMINGTEGGRIPEGESMAELGRRMRAALDSCLELPAGSKPLLVSHGMALGCLLSTLLGLPPHAERRLRLRNCSLSRVDYQESPWLASGWVIESAGDTAHLDMPALDELQR</sequence>
<dbReference type="EC" id="5.4.2.-" evidence="1"/>
<dbReference type="EMBL" id="AM286415">
    <property type="protein sequence ID" value="CAL10707.1"/>
    <property type="molecule type" value="Genomic_DNA"/>
</dbReference>
<dbReference type="RefSeq" id="WP_005166949.1">
    <property type="nucleotide sequence ID" value="NC_008800.1"/>
</dbReference>
<dbReference type="RefSeq" id="YP_001004947.1">
    <property type="nucleotide sequence ID" value="NC_008800.1"/>
</dbReference>
<dbReference type="SMR" id="A1JJB8"/>
<dbReference type="KEGG" id="yen:YE0592"/>
<dbReference type="PATRIC" id="fig|393305.7.peg.686"/>
<dbReference type="eggNOG" id="COG0406">
    <property type="taxonomic scope" value="Bacteria"/>
</dbReference>
<dbReference type="HOGENOM" id="CLU_033323_9_5_6"/>
<dbReference type="OrthoDB" id="9783269at2"/>
<dbReference type="UniPathway" id="UPA00109">
    <property type="reaction ID" value="UER00186"/>
</dbReference>
<dbReference type="Proteomes" id="UP000000642">
    <property type="component" value="Chromosome"/>
</dbReference>
<dbReference type="GO" id="GO:0005737">
    <property type="term" value="C:cytoplasm"/>
    <property type="evidence" value="ECO:0007669"/>
    <property type="project" value="TreeGrafter"/>
</dbReference>
<dbReference type="GO" id="GO:0016791">
    <property type="term" value="F:phosphatase activity"/>
    <property type="evidence" value="ECO:0007669"/>
    <property type="project" value="TreeGrafter"/>
</dbReference>
<dbReference type="GO" id="GO:0004619">
    <property type="term" value="F:phosphoglycerate mutase activity"/>
    <property type="evidence" value="ECO:0007669"/>
    <property type="project" value="UniProtKB-UniRule"/>
</dbReference>
<dbReference type="GO" id="GO:0006096">
    <property type="term" value="P:glycolytic process"/>
    <property type="evidence" value="ECO:0007669"/>
    <property type="project" value="UniProtKB-UniRule"/>
</dbReference>
<dbReference type="CDD" id="cd07067">
    <property type="entry name" value="HP_PGM_like"/>
    <property type="match status" value="1"/>
</dbReference>
<dbReference type="Gene3D" id="3.40.50.1240">
    <property type="entry name" value="Phosphoglycerate mutase-like"/>
    <property type="match status" value="1"/>
</dbReference>
<dbReference type="HAMAP" id="MF_01040">
    <property type="entry name" value="PGAM_GpmB"/>
    <property type="match status" value="1"/>
</dbReference>
<dbReference type="InterPro" id="IPR013078">
    <property type="entry name" value="His_Pase_superF_clade-1"/>
</dbReference>
<dbReference type="InterPro" id="IPR029033">
    <property type="entry name" value="His_PPase_superfam"/>
</dbReference>
<dbReference type="InterPro" id="IPR001345">
    <property type="entry name" value="PG/BPGM_mutase_AS"/>
</dbReference>
<dbReference type="InterPro" id="IPR050275">
    <property type="entry name" value="PGM_Phosphatase"/>
</dbReference>
<dbReference type="InterPro" id="IPR023086">
    <property type="entry name" value="Phosphoglycerate_mutase_GpmB"/>
</dbReference>
<dbReference type="NCBIfam" id="NF002901">
    <property type="entry name" value="PRK03482.1"/>
    <property type="match status" value="1"/>
</dbReference>
<dbReference type="PANTHER" id="PTHR48100">
    <property type="entry name" value="BROAD-SPECIFICITY PHOSPHATASE YOR283W-RELATED"/>
    <property type="match status" value="1"/>
</dbReference>
<dbReference type="PANTHER" id="PTHR48100:SF1">
    <property type="entry name" value="HISTIDINE PHOSPHATASE FAMILY PROTEIN-RELATED"/>
    <property type="match status" value="1"/>
</dbReference>
<dbReference type="Pfam" id="PF00300">
    <property type="entry name" value="His_Phos_1"/>
    <property type="match status" value="1"/>
</dbReference>
<dbReference type="SMART" id="SM00855">
    <property type="entry name" value="PGAM"/>
    <property type="match status" value="1"/>
</dbReference>
<dbReference type="SUPFAM" id="SSF53254">
    <property type="entry name" value="Phosphoglycerate mutase-like"/>
    <property type="match status" value="1"/>
</dbReference>
<dbReference type="PROSITE" id="PS00175">
    <property type="entry name" value="PG_MUTASE"/>
    <property type="match status" value="1"/>
</dbReference>
<proteinExistence type="inferred from homology"/>
<protein>
    <recommendedName>
        <fullName evidence="1">Probable phosphoglycerate mutase GpmB</fullName>
        <ecNumber evidence="1">5.4.2.-</ecNumber>
    </recommendedName>
    <alternativeName>
        <fullName evidence="1">PGAM</fullName>
    </alternativeName>
    <alternativeName>
        <fullName evidence="1">Phosphoglyceromutase</fullName>
    </alternativeName>
</protein>
<comment type="catalytic activity">
    <reaction evidence="1">
        <text>(2R)-2-phosphoglycerate = (2R)-3-phosphoglycerate</text>
        <dbReference type="Rhea" id="RHEA:15901"/>
        <dbReference type="ChEBI" id="CHEBI:58272"/>
        <dbReference type="ChEBI" id="CHEBI:58289"/>
    </reaction>
</comment>
<comment type="pathway">
    <text evidence="1">Carbohydrate degradation; glycolysis; pyruvate from D-glyceraldehyde 3-phosphate: step 3/5.</text>
</comment>
<comment type="similarity">
    <text evidence="1">Belongs to the phosphoglycerate mutase family. GpmB subfamily.</text>
</comment>
<gene>
    <name evidence="1" type="primary">gpmB</name>
    <name type="ordered locus">YE0592</name>
</gene>
<reference key="1">
    <citation type="journal article" date="2006" name="PLoS Genet.">
        <title>The complete genome sequence and comparative genome analysis of the high pathogenicity Yersinia enterocolitica strain 8081.</title>
        <authorList>
            <person name="Thomson N.R."/>
            <person name="Howard S."/>
            <person name="Wren B.W."/>
            <person name="Holden M.T.G."/>
            <person name="Crossman L."/>
            <person name="Challis G.L."/>
            <person name="Churcher C."/>
            <person name="Mungall K."/>
            <person name="Brooks K."/>
            <person name="Chillingworth T."/>
            <person name="Feltwell T."/>
            <person name="Abdellah Z."/>
            <person name="Hauser H."/>
            <person name="Jagels K."/>
            <person name="Maddison M."/>
            <person name="Moule S."/>
            <person name="Sanders M."/>
            <person name="Whitehead S."/>
            <person name="Quail M.A."/>
            <person name="Dougan G."/>
            <person name="Parkhill J."/>
            <person name="Prentice M.B."/>
        </authorList>
    </citation>
    <scope>NUCLEOTIDE SEQUENCE [LARGE SCALE GENOMIC DNA]</scope>
    <source>
        <strain>NCTC 13174 / 8081</strain>
    </source>
</reference>
<keyword id="KW-0324">Glycolysis</keyword>
<keyword id="KW-0413">Isomerase</keyword>